<evidence type="ECO:0000255" key="1">
    <source>
        <dbReference type="HAMAP-Rule" id="MF_00833"/>
    </source>
</evidence>
<comment type="function">
    <text evidence="1">Catalyzes the reduction of FMN to FMNH2 which is used to reduce pyrimidine by RutA via the Rut pathway.</text>
</comment>
<comment type="catalytic activity">
    <reaction evidence="1">
        <text>FMNH2 + NAD(+) = FMN + NADH + 2 H(+)</text>
        <dbReference type="Rhea" id="RHEA:21620"/>
        <dbReference type="ChEBI" id="CHEBI:15378"/>
        <dbReference type="ChEBI" id="CHEBI:57540"/>
        <dbReference type="ChEBI" id="CHEBI:57618"/>
        <dbReference type="ChEBI" id="CHEBI:57945"/>
        <dbReference type="ChEBI" id="CHEBI:58210"/>
        <dbReference type="EC" id="1.5.1.42"/>
    </reaction>
</comment>
<comment type="induction">
    <text evidence="1">Up-regulated by the nitrogen regulatory protein C (NtrC also called GlnG) and repressed by RutR.</text>
</comment>
<comment type="similarity">
    <text evidence="1">Belongs to the non-flavoprotein flavin reductase family. RutF subfamily.</text>
</comment>
<reference key="1">
    <citation type="journal article" date="2005" name="Nucleic Acids Res.">
        <title>Genome dynamics and diversity of Shigella species, the etiologic agents of bacillary dysentery.</title>
        <authorList>
            <person name="Yang F."/>
            <person name="Yang J."/>
            <person name="Zhang X."/>
            <person name="Chen L."/>
            <person name="Jiang Y."/>
            <person name="Yan Y."/>
            <person name="Tang X."/>
            <person name="Wang J."/>
            <person name="Xiong Z."/>
            <person name="Dong J."/>
            <person name="Xue Y."/>
            <person name="Zhu Y."/>
            <person name="Xu X."/>
            <person name="Sun L."/>
            <person name="Chen S."/>
            <person name="Nie H."/>
            <person name="Peng J."/>
            <person name="Xu J."/>
            <person name="Wang Y."/>
            <person name="Yuan Z."/>
            <person name="Wen Y."/>
            <person name="Yao Z."/>
            <person name="Shen Y."/>
            <person name="Qiang B."/>
            <person name="Hou Y."/>
            <person name="Yu J."/>
            <person name="Jin Q."/>
        </authorList>
    </citation>
    <scope>NUCLEOTIDE SEQUENCE [LARGE SCALE GENOMIC DNA]</scope>
    <source>
        <strain>Ss046</strain>
    </source>
</reference>
<dbReference type="EC" id="1.5.1.42" evidence="1"/>
<dbReference type="EMBL" id="CP000038">
    <property type="protein sequence ID" value="AAZ87756.1"/>
    <property type="molecule type" value="Genomic_DNA"/>
</dbReference>
<dbReference type="SMR" id="Q3Z3A6"/>
<dbReference type="KEGG" id="ssn:SSON_1025"/>
<dbReference type="HOGENOM" id="CLU_059021_2_2_6"/>
<dbReference type="Proteomes" id="UP000002529">
    <property type="component" value="Chromosome"/>
</dbReference>
<dbReference type="GO" id="GO:0010181">
    <property type="term" value="F:FMN binding"/>
    <property type="evidence" value="ECO:0007669"/>
    <property type="project" value="InterPro"/>
</dbReference>
<dbReference type="GO" id="GO:0052874">
    <property type="term" value="F:FMN reductase (NADH) activity"/>
    <property type="evidence" value="ECO:0007669"/>
    <property type="project" value="UniProtKB-EC"/>
</dbReference>
<dbReference type="GO" id="GO:0008752">
    <property type="term" value="F:FMN reductase [NAD(P)H] activity"/>
    <property type="evidence" value="ECO:0007669"/>
    <property type="project" value="InterPro"/>
</dbReference>
<dbReference type="GO" id="GO:0042602">
    <property type="term" value="F:riboflavin reductase (NADPH) activity"/>
    <property type="evidence" value="ECO:0007669"/>
    <property type="project" value="UniProtKB-UniRule"/>
</dbReference>
<dbReference type="GO" id="GO:0019740">
    <property type="term" value="P:nitrogen utilization"/>
    <property type="evidence" value="ECO:0007669"/>
    <property type="project" value="UniProtKB-UniRule"/>
</dbReference>
<dbReference type="GO" id="GO:0006212">
    <property type="term" value="P:uracil catabolic process"/>
    <property type="evidence" value="ECO:0007669"/>
    <property type="project" value="UniProtKB-UniRule"/>
</dbReference>
<dbReference type="FunFam" id="2.30.110.10:FF:000002">
    <property type="entry name" value="FMN reductase (NADH) RutF"/>
    <property type="match status" value="1"/>
</dbReference>
<dbReference type="Gene3D" id="2.30.110.10">
    <property type="entry name" value="Electron Transport, Fmn-binding Protein, Chain A"/>
    <property type="match status" value="1"/>
</dbReference>
<dbReference type="HAMAP" id="MF_00833">
    <property type="entry name" value="RutF"/>
    <property type="match status" value="1"/>
</dbReference>
<dbReference type="InterPro" id="IPR002563">
    <property type="entry name" value="Flavin_Rdtase-like_dom"/>
</dbReference>
<dbReference type="InterPro" id="IPR050268">
    <property type="entry name" value="NADH-dep_flavin_reductase"/>
</dbReference>
<dbReference type="InterPro" id="IPR019917">
    <property type="entry name" value="RutF"/>
</dbReference>
<dbReference type="InterPro" id="IPR012349">
    <property type="entry name" value="Split_barrel_FMN-bd"/>
</dbReference>
<dbReference type="NCBIfam" id="TIGR03615">
    <property type="entry name" value="RutF"/>
    <property type="match status" value="1"/>
</dbReference>
<dbReference type="PANTHER" id="PTHR30466">
    <property type="entry name" value="FLAVIN REDUCTASE"/>
    <property type="match status" value="1"/>
</dbReference>
<dbReference type="PANTHER" id="PTHR30466:SF1">
    <property type="entry name" value="FMN REDUCTASE (NADH) RUTF"/>
    <property type="match status" value="1"/>
</dbReference>
<dbReference type="Pfam" id="PF01613">
    <property type="entry name" value="Flavin_Reduct"/>
    <property type="match status" value="1"/>
</dbReference>
<dbReference type="SMART" id="SM00903">
    <property type="entry name" value="Flavin_Reduct"/>
    <property type="match status" value="1"/>
</dbReference>
<dbReference type="SUPFAM" id="SSF50475">
    <property type="entry name" value="FMN-binding split barrel"/>
    <property type="match status" value="1"/>
</dbReference>
<accession>Q3Z3A6</accession>
<proteinExistence type="inferred from homology"/>
<sequence length="152" mass="16374">MSCMGAAVNIITTDGPSGRAGFTASAVCSVTDTPPTLLVCLNRGASVWPVFNENRTLCVNTLSAGQEPLSNLFGGKTPMEHRFAAARWQTGVTGCPQLEEALVSFDCRISQVVSVGTHDILFCAIEAIHRHTTPYGLVWFDRSYHALMRPAC</sequence>
<organism>
    <name type="scientific">Shigella sonnei (strain Ss046)</name>
    <dbReference type="NCBI Taxonomy" id="300269"/>
    <lineage>
        <taxon>Bacteria</taxon>
        <taxon>Pseudomonadati</taxon>
        <taxon>Pseudomonadota</taxon>
        <taxon>Gammaproteobacteria</taxon>
        <taxon>Enterobacterales</taxon>
        <taxon>Enterobacteriaceae</taxon>
        <taxon>Shigella</taxon>
    </lineage>
</organism>
<protein>
    <recommendedName>
        <fullName evidence="1">FMN reductase (NADH) RutF</fullName>
        <ecNumber evidence="1">1.5.1.42</ecNumber>
    </recommendedName>
    <alternativeName>
        <fullName evidence="1">FMN reductase</fullName>
    </alternativeName>
    <alternativeName>
        <fullName evidence="1">NADH-flavin reductase RutF</fullName>
    </alternativeName>
    <alternativeName>
        <fullName evidence="1">NADH:flavin oxidoreductase</fullName>
    </alternativeName>
</protein>
<name>RUTF_SHISS</name>
<keyword id="KW-0285">Flavoprotein</keyword>
<keyword id="KW-0288">FMN</keyword>
<keyword id="KW-0520">NAD</keyword>
<keyword id="KW-0560">Oxidoreductase</keyword>
<keyword id="KW-1185">Reference proteome</keyword>
<gene>
    <name evidence="1" type="primary">rutF</name>
    <name type="ordered locus">SSON_1025</name>
</gene>
<feature type="chain" id="PRO_0000403047" description="FMN reductase (NADH) RutF">
    <location>
        <begin position="1"/>
        <end position="152"/>
    </location>
</feature>